<evidence type="ECO:0000250" key="1">
    <source>
        <dbReference type="UniProtKB" id="P03958"/>
    </source>
</evidence>
<evidence type="ECO:0000250" key="2">
    <source>
        <dbReference type="UniProtKB" id="Q8LPL7"/>
    </source>
</evidence>
<evidence type="ECO:0000269" key="3">
    <source>
    </source>
</evidence>
<evidence type="ECO:0000269" key="4">
    <source>
    </source>
</evidence>
<evidence type="ECO:0000303" key="5">
    <source>
    </source>
</evidence>
<evidence type="ECO:0000303" key="6">
    <source>
    </source>
</evidence>
<evidence type="ECO:0000303" key="7">
    <source>
    </source>
</evidence>
<evidence type="ECO:0000303" key="8">
    <source>
    </source>
</evidence>
<evidence type="ECO:0000305" key="9"/>
<evidence type="ECO:0000305" key="10">
    <source>
    </source>
</evidence>
<evidence type="ECO:0000312" key="11">
    <source>
        <dbReference type="HGNC" id="HGNC:31853"/>
    </source>
</evidence>
<evidence type="ECO:0007829" key="12">
    <source>
        <dbReference type="PDB" id="8QCH"/>
    </source>
</evidence>
<organism>
    <name type="scientific">Homo sapiens</name>
    <name type="common">Human</name>
    <dbReference type="NCBI Taxonomy" id="9606"/>
    <lineage>
        <taxon>Eukaryota</taxon>
        <taxon>Metazoa</taxon>
        <taxon>Chordata</taxon>
        <taxon>Craniata</taxon>
        <taxon>Vertebrata</taxon>
        <taxon>Euteleostomi</taxon>
        <taxon>Mammalia</taxon>
        <taxon>Eutheria</taxon>
        <taxon>Euarchontoglires</taxon>
        <taxon>Primates</taxon>
        <taxon>Haplorrhini</taxon>
        <taxon>Catarrhini</taxon>
        <taxon>Hominidae</taxon>
        <taxon>Homo</taxon>
    </lineage>
</organism>
<dbReference type="EC" id="3.5.4.-" evidence="3 4"/>
<dbReference type="EMBL" id="AK126583">
    <property type="status" value="NOT_ANNOTATED_CDS"/>
    <property type="molecule type" value="mRNA"/>
</dbReference>
<dbReference type="EMBL" id="AK298870">
    <property type="protein sequence ID" value="BAG60990.1"/>
    <property type="molecule type" value="mRNA"/>
</dbReference>
<dbReference type="EMBL" id="AC009852">
    <property type="status" value="NOT_ANNOTATED_CDS"/>
    <property type="molecule type" value="Genomic_DNA"/>
</dbReference>
<dbReference type="EMBL" id="AC018924">
    <property type="status" value="NOT_ANNOTATED_CDS"/>
    <property type="molecule type" value="Genomic_DNA"/>
</dbReference>
<dbReference type="EMBL" id="BC075857">
    <property type="protein sequence ID" value="AAH75857.1"/>
    <property type="molecule type" value="mRNA"/>
</dbReference>
<dbReference type="CCDS" id="CCDS32214.1">
    <molecule id="Q6DHV7-2"/>
</dbReference>
<dbReference type="CCDS" id="CCDS53936.1">
    <molecule id="Q6DHV7-3"/>
</dbReference>
<dbReference type="CCDS" id="CCDS81868.1">
    <molecule id="Q6DHV7-1"/>
</dbReference>
<dbReference type="RefSeq" id="NP_001012987.1">
    <molecule id="Q6DHV7-2"/>
    <property type="nucleotide sequence ID" value="NM_001012969.4"/>
</dbReference>
<dbReference type="RefSeq" id="NP_001152752.1">
    <molecule id="Q6DHV7-3"/>
    <property type="nucleotide sequence ID" value="NM_001159280.3"/>
</dbReference>
<dbReference type="RefSeq" id="NP_001311293.1">
    <molecule id="Q6DHV7-2"/>
    <property type="nucleotide sequence ID" value="NM_001324364.2"/>
</dbReference>
<dbReference type="RefSeq" id="NP_001311294.1">
    <molecule id="Q6DHV7-2"/>
    <property type="nucleotide sequence ID" value="NM_001324365.2"/>
</dbReference>
<dbReference type="RefSeq" id="NP_001311295.1">
    <molecule id="Q6DHV7-1"/>
    <property type="nucleotide sequence ID" value="NM_001324366.2"/>
</dbReference>
<dbReference type="RefSeq" id="NP_001311297.1">
    <molecule id="Q6DHV7-2"/>
    <property type="nucleotide sequence ID" value="NM_001324368.2"/>
</dbReference>
<dbReference type="RefSeq" id="XP_011519593.1">
    <molecule id="Q6DHV7-1"/>
    <property type="nucleotide sequence ID" value="XM_011521291.3"/>
</dbReference>
<dbReference type="RefSeq" id="XP_016877453.1">
    <molecule id="Q6DHV7-1"/>
    <property type="nucleotide sequence ID" value="XM_017021964.3"/>
</dbReference>
<dbReference type="RefSeq" id="XP_016877454.1">
    <molecule id="Q6DHV7-1"/>
    <property type="nucleotide sequence ID" value="XM_017021965.2"/>
</dbReference>
<dbReference type="RefSeq" id="XP_016877455.1">
    <molecule id="Q6DHV7-1"/>
    <property type="nucleotide sequence ID" value="XM_017021966.3"/>
</dbReference>
<dbReference type="RefSeq" id="XP_024305626.1">
    <molecule id="Q6DHV7-3"/>
    <property type="nucleotide sequence ID" value="XM_024449858.2"/>
</dbReference>
<dbReference type="RefSeq" id="XP_047288158.1">
    <molecule id="Q6DHV7-3"/>
    <property type="nucleotide sequence ID" value="XM_047432202.1"/>
</dbReference>
<dbReference type="RefSeq" id="XP_047288159.1">
    <molecule id="Q6DHV7-3"/>
    <property type="nucleotide sequence ID" value="XM_047432203.1"/>
</dbReference>
<dbReference type="RefSeq" id="XP_047288160.1">
    <molecule id="Q6DHV7-3"/>
    <property type="nucleotide sequence ID" value="XM_047432204.1"/>
</dbReference>
<dbReference type="RefSeq" id="XP_054233360.1">
    <molecule id="Q6DHV7-1"/>
    <property type="nucleotide sequence ID" value="XM_054377385.1"/>
</dbReference>
<dbReference type="RefSeq" id="XP_054233361.1">
    <molecule id="Q6DHV7-1"/>
    <property type="nucleotide sequence ID" value="XM_054377386.1"/>
</dbReference>
<dbReference type="RefSeq" id="XP_054233362.1">
    <molecule id="Q6DHV7-1"/>
    <property type="nucleotide sequence ID" value="XM_054377387.1"/>
</dbReference>
<dbReference type="RefSeq" id="XP_054233363.1">
    <molecule id="Q6DHV7-1"/>
    <property type="nucleotide sequence ID" value="XM_054377388.1"/>
</dbReference>
<dbReference type="RefSeq" id="XP_054233364.1">
    <molecule id="Q6DHV7-3"/>
    <property type="nucleotide sequence ID" value="XM_054377389.1"/>
</dbReference>
<dbReference type="RefSeq" id="XP_054233365.1">
    <molecule id="Q6DHV7-3"/>
    <property type="nucleotide sequence ID" value="XM_054377390.1"/>
</dbReference>
<dbReference type="RefSeq" id="XP_054233366.1">
    <molecule id="Q6DHV7-3"/>
    <property type="nucleotide sequence ID" value="XM_054377391.1"/>
</dbReference>
<dbReference type="RefSeq" id="XP_054233367.1">
    <molecule id="Q6DHV7-3"/>
    <property type="nucleotide sequence ID" value="XM_054377392.1"/>
</dbReference>
<dbReference type="PDB" id="8QCH">
    <property type="method" value="X-ray"/>
    <property type="resolution" value="2.44 A"/>
    <property type="chains" value="A/B/C/D/E/F/G/H=1-355"/>
</dbReference>
<dbReference type="PDBsum" id="8QCH"/>
<dbReference type="SMR" id="Q6DHV7"/>
<dbReference type="BioGRID" id="127803">
    <property type="interactions" value="7"/>
</dbReference>
<dbReference type="FunCoup" id="Q6DHV7">
    <property type="interactions" value="977"/>
</dbReference>
<dbReference type="IntAct" id="Q6DHV7">
    <property type="interactions" value="17"/>
</dbReference>
<dbReference type="STRING" id="9606.ENSP00000456242"/>
<dbReference type="ChEMBL" id="CHEMBL1795150"/>
<dbReference type="iPTMnet" id="Q6DHV7"/>
<dbReference type="PhosphoSitePlus" id="Q6DHV7"/>
<dbReference type="BioMuta" id="ADAL"/>
<dbReference type="DMDM" id="146286026"/>
<dbReference type="jPOST" id="Q6DHV7"/>
<dbReference type="MassIVE" id="Q6DHV7"/>
<dbReference type="PaxDb" id="9606-ENSP00000398744"/>
<dbReference type="PeptideAtlas" id="Q6DHV7"/>
<dbReference type="ProteomicsDB" id="66225">
    <molecule id="Q6DHV7-1"/>
</dbReference>
<dbReference type="ProteomicsDB" id="66226">
    <molecule id="Q6DHV7-2"/>
</dbReference>
<dbReference type="ProteomicsDB" id="66227">
    <molecule id="Q6DHV7-3"/>
</dbReference>
<dbReference type="Pumba" id="Q6DHV7"/>
<dbReference type="Antibodypedia" id="23863">
    <property type="antibodies" value="91 antibodies from 16 providers"/>
</dbReference>
<dbReference type="DNASU" id="161823"/>
<dbReference type="Ensembl" id="ENST00000389651.8">
    <molecule id="Q6DHV7-2"/>
    <property type="protein sequence ID" value="ENSP00000374302.4"/>
    <property type="gene ID" value="ENSG00000168803.16"/>
</dbReference>
<dbReference type="Ensembl" id="ENST00000422466.6">
    <molecule id="Q6DHV7-3"/>
    <property type="protein sequence ID" value="ENSP00000398744.3"/>
    <property type="gene ID" value="ENSG00000168803.16"/>
</dbReference>
<dbReference type="Ensembl" id="ENST00000428046.7">
    <molecule id="Q6DHV7-3"/>
    <property type="protein sequence ID" value="ENSP00000413074.3"/>
    <property type="gene ID" value="ENSG00000168803.16"/>
</dbReference>
<dbReference type="Ensembl" id="ENST00000562188.7">
    <molecule id="Q6DHV7-1"/>
    <property type="protein sequence ID" value="ENSP00000456242.1"/>
    <property type="gene ID" value="ENSG00000168803.16"/>
</dbReference>
<dbReference type="Ensembl" id="ENST00000610420.4">
    <molecule id="Q6DHV7-2"/>
    <property type="protein sequence ID" value="ENSP00000478575.1"/>
    <property type="gene ID" value="ENSG00000168803.16"/>
</dbReference>
<dbReference type="GeneID" id="161823"/>
<dbReference type="KEGG" id="hsa:161823"/>
<dbReference type="MANE-Select" id="ENST00000562188.7">
    <property type="protein sequence ID" value="ENSP00000456242.1"/>
    <property type="RefSeq nucleotide sequence ID" value="NM_001324366.2"/>
    <property type="RefSeq protein sequence ID" value="NP_001311295.1"/>
</dbReference>
<dbReference type="UCSC" id="uc001zrh.5">
    <molecule id="Q6DHV7-1"/>
    <property type="organism name" value="human"/>
</dbReference>
<dbReference type="AGR" id="HGNC:31853"/>
<dbReference type="CTD" id="161823"/>
<dbReference type="DisGeNET" id="161823"/>
<dbReference type="GeneCards" id="MAPDA"/>
<dbReference type="HGNC" id="HGNC:31853">
    <property type="gene designation" value="MAPDA"/>
</dbReference>
<dbReference type="HPA" id="ENSG00000168803">
    <property type="expression patterns" value="Low tissue specificity"/>
</dbReference>
<dbReference type="MIM" id="619346">
    <property type="type" value="gene"/>
</dbReference>
<dbReference type="neXtProt" id="NX_Q6DHV7"/>
<dbReference type="OpenTargets" id="ENSG00000168803"/>
<dbReference type="PharmGKB" id="PA142672643"/>
<dbReference type="VEuPathDB" id="HostDB:ENSG00000168803"/>
<dbReference type="eggNOG" id="KOG1097">
    <property type="taxonomic scope" value="Eukaryota"/>
</dbReference>
<dbReference type="GeneTree" id="ENSGT00950000183113"/>
<dbReference type="HOGENOM" id="CLU_039228_6_0_1"/>
<dbReference type="InParanoid" id="Q6DHV7"/>
<dbReference type="OMA" id="RPQFKPY"/>
<dbReference type="OrthoDB" id="272271at2759"/>
<dbReference type="PAN-GO" id="Q6DHV7">
    <property type="GO annotations" value="3 GO annotations based on evolutionary models"/>
</dbReference>
<dbReference type="PhylomeDB" id="Q6DHV7"/>
<dbReference type="TreeFam" id="TF314270"/>
<dbReference type="BioCyc" id="MetaCyc:ENSG00000168803-MONOMER"/>
<dbReference type="PathwayCommons" id="Q6DHV7"/>
<dbReference type="Reactome" id="R-HSA-2161541">
    <property type="pathway name" value="Abacavir metabolism"/>
</dbReference>
<dbReference type="Reactome" id="R-HSA-74217">
    <property type="pathway name" value="Purine salvage"/>
</dbReference>
<dbReference type="SignaLink" id="Q6DHV7"/>
<dbReference type="BioGRID-ORCS" id="161823">
    <property type="hits" value="13 hits in 1156 CRISPR screens"/>
</dbReference>
<dbReference type="ChiTaRS" id="ADAL">
    <property type="organism name" value="human"/>
</dbReference>
<dbReference type="GenomeRNAi" id="161823"/>
<dbReference type="Pharos" id="Q6DHV7">
    <property type="development level" value="Tbio"/>
</dbReference>
<dbReference type="PRO" id="PR:Q6DHV7"/>
<dbReference type="Proteomes" id="UP000005640">
    <property type="component" value="Chromosome 15"/>
</dbReference>
<dbReference type="RNAct" id="Q6DHV7">
    <property type="molecule type" value="protein"/>
</dbReference>
<dbReference type="Bgee" id="ENSG00000168803">
    <property type="expression patterns" value="Expressed in male germ line stem cell (sensu Vertebrata) in testis and 147 other cell types or tissues"/>
</dbReference>
<dbReference type="ExpressionAtlas" id="Q6DHV7">
    <property type="expression patterns" value="baseline and differential"/>
</dbReference>
<dbReference type="GO" id="GO:0005829">
    <property type="term" value="C:cytosol"/>
    <property type="evidence" value="ECO:0000304"/>
    <property type="project" value="Reactome"/>
</dbReference>
<dbReference type="GO" id="GO:0004000">
    <property type="term" value="F:adenosine deaminase activity"/>
    <property type="evidence" value="ECO:0000318"/>
    <property type="project" value="GO_Central"/>
</dbReference>
<dbReference type="GO" id="GO:0046872">
    <property type="term" value="F:metal ion binding"/>
    <property type="evidence" value="ECO:0007669"/>
    <property type="project" value="UniProtKB-KW"/>
</dbReference>
<dbReference type="GO" id="GO:0062154">
    <property type="term" value="F:N6-methyl-AMP deaminase activity"/>
    <property type="evidence" value="ECO:0007669"/>
    <property type="project" value="RHEA"/>
</dbReference>
<dbReference type="GO" id="GO:0006154">
    <property type="term" value="P:adenosine catabolic process"/>
    <property type="evidence" value="ECO:0000318"/>
    <property type="project" value="GO_Central"/>
</dbReference>
<dbReference type="GO" id="GO:0046103">
    <property type="term" value="P:inosine biosynthetic process"/>
    <property type="evidence" value="ECO:0000318"/>
    <property type="project" value="GO_Central"/>
</dbReference>
<dbReference type="GO" id="GO:0009117">
    <property type="term" value="P:nucleotide metabolic process"/>
    <property type="evidence" value="ECO:0007669"/>
    <property type="project" value="UniProtKB-KW"/>
</dbReference>
<dbReference type="GO" id="GO:0097305">
    <property type="term" value="P:response to alcohol"/>
    <property type="evidence" value="ECO:0007669"/>
    <property type="project" value="Ensembl"/>
</dbReference>
<dbReference type="CDD" id="cd00443">
    <property type="entry name" value="ADA_AMPD"/>
    <property type="match status" value="1"/>
</dbReference>
<dbReference type="FunFam" id="3.20.20.140:FF:000033">
    <property type="entry name" value="Adenosine deaminase-like protein"/>
    <property type="match status" value="1"/>
</dbReference>
<dbReference type="Gene3D" id="3.20.20.140">
    <property type="entry name" value="Metal-dependent hydrolases"/>
    <property type="match status" value="1"/>
</dbReference>
<dbReference type="InterPro" id="IPR001365">
    <property type="entry name" value="A_deaminase_dom"/>
</dbReference>
<dbReference type="InterPro" id="IPR006330">
    <property type="entry name" value="Ado/ade_deaminase"/>
</dbReference>
<dbReference type="InterPro" id="IPR032466">
    <property type="entry name" value="Metal_Hydrolase"/>
</dbReference>
<dbReference type="PANTHER" id="PTHR11409">
    <property type="entry name" value="ADENOSINE DEAMINASE"/>
    <property type="match status" value="1"/>
</dbReference>
<dbReference type="PANTHER" id="PTHR11409:SF42">
    <property type="entry name" value="ADENOSINE DEAMINASE-LIKE PROTEIN"/>
    <property type="match status" value="1"/>
</dbReference>
<dbReference type="Pfam" id="PF00962">
    <property type="entry name" value="A_deaminase"/>
    <property type="match status" value="1"/>
</dbReference>
<dbReference type="SUPFAM" id="SSF51556">
    <property type="entry name" value="Metallo-dependent hydrolases"/>
    <property type="match status" value="1"/>
</dbReference>
<proteinExistence type="evidence at protein level"/>
<reference key="1">
    <citation type="journal article" date="2004" name="Nat. Genet.">
        <title>Complete sequencing and characterization of 21,243 full-length human cDNAs.</title>
        <authorList>
            <person name="Ota T."/>
            <person name="Suzuki Y."/>
            <person name="Nishikawa T."/>
            <person name="Otsuki T."/>
            <person name="Sugiyama T."/>
            <person name="Irie R."/>
            <person name="Wakamatsu A."/>
            <person name="Hayashi K."/>
            <person name="Sato H."/>
            <person name="Nagai K."/>
            <person name="Kimura K."/>
            <person name="Makita H."/>
            <person name="Sekine M."/>
            <person name="Obayashi M."/>
            <person name="Nishi T."/>
            <person name="Shibahara T."/>
            <person name="Tanaka T."/>
            <person name="Ishii S."/>
            <person name="Yamamoto J."/>
            <person name="Saito K."/>
            <person name="Kawai Y."/>
            <person name="Isono Y."/>
            <person name="Nakamura Y."/>
            <person name="Nagahari K."/>
            <person name="Murakami K."/>
            <person name="Yasuda T."/>
            <person name="Iwayanagi T."/>
            <person name="Wagatsuma M."/>
            <person name="Shiratori A."/>
            <person name="Sudo H."/>
            <person name="Hosoiri T."/>
            <person name="Kaku Y."/>
            <person name="Kodaira H."/>
            <person name="Kondo H."/>
            <person name="Sugawara M."/>
            <person name="Takahashi M."/>
            <person name="Kanda K."/>
            <person name="Yokoi T."/>
            <person name="Furuya T."/>
            <person name="Kikkawa E."/>
            <person name="Omura Y."/>
            <person name="Abe K."/>
            <person name="Kamihara K."/>
            <person name="Katsuta N."/>
            <person name="Sato K."/>
            <person name="Tanikawa M."/>
            <person name="Yamazaki M."/>
            <person name="Ninomiya K."/>
            <person name="Ishibashi T."/>
            <person name="Yamashita H."/>
            <person name="Murakawa K."/>
            <person name="Fujimori K."/>
            <person name="Tanai H."/>
            <person name="Kimata M."/>
            <person name="Watanabe M."/>
            <person name="Hiraoka S."/>
            <person name="Chiba Y."/>
            <person name="Ishida S."/>
            <person name="Ono Y."/>
            <person name="Takiguchi S."/>
            <person name="Watanabe S."/>
            <person name="Yosida M."/>
            <person name="Hotuta T."/>
            <person name="Kusano J."/>
            <person name="Kanehori K."/>
            <person name="Takahashi-Fujii A."/>
            <person name="Hara H."/>
            <person name="Tanase T.-O."/>
            <person name="Nomura Y."/>
            <person name="Togiya S."/>
            <person name="Komai F."/>
            <person name="Hara R."/>
            <person name="Takeuchi K."/>
            <person name="Arita M."/>
            <person name="Imose N."/>
            <person name="Musashino K."/>
            <person name="Yuuki H."/>
            <person name="Oshima A."/>
            <person name="Sasaki N."/>
            <person name="Aotsuka S."/>
            <person name="Yoshikawa Y."/>
            <person name="Matsunawa H."/>
            <person name="Ichihara T."/>
            <person name="Shiohata N."/>
            <person name="Sano S."/>
            <person name="Moriya S."/>
            <person name="Momiyama H."/>
            <person name="Satoh N."/>
            <person name="Takami S."/>
            <person name="Terashima Y."/>
            <person name="Suzuki O."/>
            <person name="Nakagawa S."/>
            <person name="Senoh A."/>
            <person name="Mizoguchi H."/>
            <person name="Goto Y."/>
            <person name="Shimizu F."/>
            <person name="Wakebe H."/>
            <person name="Hishigaki H."/>
            <person name="Watanabe T."/>
            <person name="Sugiyama A."/>
            <person name="Takemoto M."/>
            <person name="Kawakami B."/>
            <person name="Yamazaki M."/>
            <person name="Watanabe K."/>
            <person name="Kumagai A."/>
            <person name="Itakura S."/>
            <person name="Fukuzumi Y."/>
            <person name="Fujimori Y."/>
            <person name="Komiyama M."/>
            <person name="Tashiro H."/>
            <person name="Tanigami A."/>
            <person name="Fujiwara T."/>
            <person name="Ono T."/>
            <person name="Yamada K."/>
            <person name="Fujii Y."/>
            <person name="Ozaki K."/>
            <person name="Hirao M."/>
            <person name="Ohmori Y."/>
            <person name="Kawabata A."/>
            <person name="Hikiji T."/>
            <person name="Kobatake N."/>
            <person name="Inagaki H."/>
            <person name="Ikema Y."/>
            <person name="Okamoto S."/>
            <person name="Okitani R."/>
            <person name="Kawakami T."/>
            <person name="Noguchi S."/>
            <person name="Itoh T."/>
            <person name="Shigeta K."/>
            <person name="Senba T."/>
            <person name="Matsumura K."/>
            <person name="Nakajima Y."/>
            <person name="Mizuno T."/>
            <person name="Morinaga M."/>
            <person name="Sasaki M."/>
            <person name="Togashi T."/>
            <person name="Oyama M."/>
            <person name="Hata H."/>
            <person name="Watanabe M."/>
            <person name="Komatsu T."/>
            <person name="Mizushima-Sugano J."/>
            <person name="Satoh T."/>
            <person name="Shirai Y."/>
            <person name="Takahashi Y."/>
            <person name="Nakagawa K."/>
            <person name="Okumura K."/>
            <person name="Nagase T."/>
            <person name="Nomura N."/>
            <person name="Kikuchi H."/>
            <person name="Masuho Y."/>
            <person name="Yamashita R."/>
            <person name="Nakai K."/>
            <person name="Yada T."/>
            <person name="Nakamura Y."/>
            <person name="Ohara O."/>
            <person name="Isogai T."/>
            <person name="Sugano S."/>
        </authorList>
    </citation>
    <scope>NUCLEOTIDE SEQUENCE [LARGE SCALE MRNA] (ISOFORM 3)</scope>
    <scope>NUCLEOTIDE SEQUENCE [LARGE SCALE MRNA] OF 92-355 (ISOFORM 1)</scope>
</reference>
<reference key="2">
    <citation type="journal article" date="2006" name="Nature">
        <title>Analysis of the DNA sequence and duplication history of human chromosome 15.</title>
        <authorList>
            <person name="Zody M.C."/>
            <person name="Garber M."/>
            <person name="Sharpe T."/>
            <person name="Young S.K."/>
            <person name="Rowen L."/>
            <person name="O'Neill K."/>
            <person name="Whittaker C.A."/>
            <person name="Kamal M."/>
            <person name="Chang J.L."/>
            <person name="Cuomo C.A."/>
            <person name="Dewar K."/>
            <person name="FitzGerald M.G."/>
            <person name="Kodira C.D."/>
            <person name="Madan A."/>
            <person name="Qin S."/>
            <person name="Yang X."/>
            <person name="Abbasi N."/>
            <person name="Abouelleil A."/>
            <person name="Arachchi H.M."/>
            <person name="Baradarani L."/>
            <person name="Birditt B."/>
            <person name="Bloom S."/>
            <person name="Bloom T."/>
            <person name="Borowsky M.L."/>
            <person name="Burke J."/>
            <person name="Butler J."/>
            <person name="Cook A."/>
            <person name="DeArellano K."/>
            <person name="DeCaprio D."/>
            <person name="Dorris L. III"/>
            <person name="Dors M."/>
            <person name="Eichler E.E."/>
            <person name="Engels R."/>
            <person name="Fahey J."/>
            <person name="Fleetwood P."/>
            <person name="Friedman C."/>
            <person name="Gearin G."/>
            <person name="Hall J.L."/>
            <person name="Hensley G."/>
            <person name="Johnson E."/>
            <person name="Jones C."/>
            <person name="Kamat A."/>
            <person name="Kaur A."/>
            <person name="Locke D.P."/>
            <person name="Madan A."/>
            <person name="Munson G."/>
            <person name="Jaffe D.B."/>
            <person name="Lui A."/>
            <person name="Macdonald P."/>
            <person name="Mauceli E."/>
            <person name="Naylor J.W."/>
            <person name="Nesbitt R."/>
            <person name="Nicol R."/>
            <person name="O'Leary S.B."/>
            <person name="Ratcliffe A."/>
            <person name="Rounsley S."/>
            <person name="She X."/>
            <person name="Sneddon K.M.B."/>
            <person name="Stewart S."/>
            <person name="Sougnez C."/>
            <person name="Stone S.M."/>
            <person name="Topham K."/>
            <person name="Vincent D."/>
            <person name="Wang S."/>
            <person name="Zimmer A.R."/>
            <person name="Birren B.W."/>
            <person name="Hood L."/>
            <person name="Lander E.S."/>
            <person name="Nusbaum C."/>
        </authorList>
    </citation>
    <scope>NUCLEOTIDE SEQUENCE [LARGE SCALE GENOMIC DNA]</scope>
</reference>
<reference key="3">
    <citation type="journal article" date="2004" name="Genome Res.">
        <title>The status, quality, and expansion of the NIH full-length cDNA project: the Mammalian Gene Collection (MGC).</title>
        <authorList>
            <consortium name="The MGC Project Team"/>
        </authorList>
    </citation>
    <scope>NUCLEOTIDE SEQUENCE [LARGE SCALE MRNA] (ISOFORM 2)</scope>
    <source>
        <tissue>Brain</tissue>
    </source>
</reference>
<reference key="4">
    <citation type="journal article" date="2011" name="J. Med. Chem.">
        <title>Adenosine deaminase-like protein 1 (ADAL1): characterization and substrate specificity in the hydrolysis of N(6)- or O(6)-substituted purine or 2-aminopurine nucleoside monophosphates.</title>
        <authorList>
            <person name="Murakami E."/>
            <person name="Bao H."/>
            <person name="Mosley R.T."/>
            <person name="Du J."/>
            <person name="Sofia M.J."/>
            <person name="Furman P.A."/>
        </authorList>
    </citation>
    <scope>IDENTIFICATION BY MASS SPECTROMETRY</scope>
    <scope>FUNCTION</scope>
    <scope>CATALYTIC ACTIVITY</scope>
    <scope>COFACTOR</scope>
    <scope>BIOPHYSICOCHEMICAL PROPERTIES</scope>
    <scope>SUBUNIT</scope>
</reference>
<reference key="5">
    <citation type="journal article" date="2018" name="Plant Cell">
        <title>m6A RNA degradation products are catabolized by an evolutionarily conserved N6-methyl-AMP deaminase in plant and mammalian cells.</title>
        <authorList>
            <person name="Chen M."/>
            <person name="Urs M.J."/>
            <person name="Sanchez-Gonzalez I."/>
            <person name="Olayioye M.A."/>
            <person name="Herde M."/>
            <person name="Witte C.P."/>
        </authorList>
    </citation>
    <scope>FUNCTION</scope>
    <scope>CATALYTIC ACTIVITY</scope>
    <scope>COFACTOR</scope>
</reference>
<accession>Q6DHV7</accession>
<accession>A6NHZ3</accession>
<accession>B4DQM8</accession>
<feature type="chain" id="PRO_0000285090" description="N6-Methyl-AMP deaminase">
    <location>
        <begin position="1"/>
        <end position="355"/>
    </location>
</feature>
<feature type="active site" description="Proton donor" evidence="1">
    <location>
        <position position="211"/>
    </location>
</feature>
<feature type="binding site" evidence="2">
    <location>
        <position position="24"/>
    </location>
    <ligand>
        <name>Zn(2+)</name>
        <dbReference type="ChEBI" id="CHEBI:29105"/>
        <note>catalytic</note>
    </ligand>
</feature>
<feature type="binding site" evidence="2">
    <location>
        <position position="26"/>
    </location>
    <ligand>
        <name>N(6)-methyl-AMP</name>
        <dbReference type="ChEBI" id="CHEBI:144842"/>
    </ligand>
</feature>
<feature type="binding site" evidence="2">
    <location>
        <position position="26"/>
    </location>
    <ligand>
        <name>Zn(2+)</name>
        <dbReference type="ChEBI" id="CHEBI:29105"/>
        <note>catalytic</note>
    </ligand>
</feature>
<feature type="binding site" evidence="2">
    <location>
        <position position="28"/>
    </location>
    <ligand>
        <name>N(6)-methyl-AMP</name>
        <dbReference type="ChEBI" id="CHEBI:144842"/>
    </ligand>
</feature>
<feature type="binding site" evidence="2">
    <location>
        <position position="74"/>
    </location>
    <ligand>
        <name>N(6)-methyl-AMP</name>
        <dbReference type="ChEBI" id="CHEBI:144842"/>
    </ligand>
</feature>
<feature type="binding site" evidence="2">
    <location>
        <begin position="106"/>
        <end position="109"/>
    </location>
    <ligand>
        <name>N(6)-methyl-AMP</name>
        <dbReference type="ChEBI" id="CHEBI:144842"/>
    </ligand>
</feature>
<feature type="binding site" evidence="2">
    <location>
        <position position="148"/>
    </location>
    <ligand>
        <name>N(6)-methyl-AMP</name>
        <dbReference type="ChEBI" id="CHEBI:144842"/>
    </ligand>
</feature>
<feature type="binding site" evidence="2">
    <location>
        <position position="181"/>
    </location>
    <ligand>
        <name>N(6)-methyl-AMP</name>
        <dbReference type="ChEBI" id="CHEBI:144842"/>
    </ligand>
</feature>
<feature type="binding site" evidence="2">
    <location>
        <position position="208"/>
    </location>
    <ligand>
        <name>Zn(2+)</name>
        <dbReference type="ChEBI" id="CHEBI:29105"/>
        <note>catalytic</note>
    </ligand>
</feature>
<feature type="binding site" evidence="2">
    <location>
        <position position="211"/>
    </location>
    <ligand>
        <name>N(6)-methyl-AMP</name>
        <dbReference type="ChEBI" id="CHEBI:144842"/>
    </ligand>
</feature>
<feature type="binding site" evidence="2">
    <location>
        <position position="293"/>
    </location>
    <ligand>
        <name>N(6)-methyl-AMP</name>
        <dbReference type="ChEBI" id="CHEBI:144842"/>
    </ligand>
</feature>
<feature type="binding site" evidence="2">
    <location>
        <position position="293"/>
    </location>
    <ligand>
        <name>Zn(2+)</name>
        <dbReference type="ChEBI" id="CHEBI:29105"/>
        <note>catalytic</note>
    </ligand>
</feature>
<feature type="binding site" evidence="2">
    <location>
        <position position="294"/>
    </location>
    <ligand>
        <name>N(6)-methyl-AMP</name>
        <dbReference type="ChEBI" id="CHEBI:144842"/>
    </ligand>
</feature>
<feature type="site" description="Important for catalytic activity" evidence="1">
    <location>
        <position position="232"/>
    </location>
</feature>
<feature type="splice variant" id="VSP_042782" description="In isoform 3." evidence="5">
    <location>
        <begin position="185"/>
        <end position="211"/>
    </location>
</feature>
<feature type="splice variant" id="VSP_024821" description="In isoform 2." evidence="6">
    <original>ELCLTSNVKSQTVPSYDQHHFGFWYSIAHPSVICTDDKGVFATHLSQEYQLAAETFNLTQSQVWDLSYESINYIFASDSTRSELRKKWNHLKPRVLHI</original>
    <variation>GKAWSFRSSR</variation>
    <location>
        <begin position="258"/>
        <end position="355"/>
    </location>
</feature>
<feature type="sequence conflict" description="In Ref. 1; AK126583." evidence="9" ref="1">
    <original>K</original>
    <variation>E</variation>
    <location>
        <position position="119"/>
    </location>
</feature>
<feature type="sequence conflict" description="In Ref. 1; AK126583." evidence="9" ref="1">
    <original>I</original>
    <variation>T</variation>
    <location>
        <position position="139"/>
    </location>
</feature>
<feature type="helix" evidence="12">
    <location>
        <begin position="13"/>
        <end position="17"/>
    </location>
</feature>
<feature type="strand" evidence="12">
    <location>
        <begin position="20"/>
        <end position="26"/>
    </location>
</feature>
<feature type="helix" evidence="12">
    <location>
        <begin position="27"/>
        <end position="29"/>
    </location>
</feature>
<feature type="helix" evidence="12">
    <location>
        <begin position="33"/>
        <end position="42"/>
    </location>
</feature>
<feature type="helix" evidence="12">
    <location>
        <begin position="44"/>
        <end position="46"/>
    </location>
</feature>
<feature type="helix" evidence="12">
    <location>
        <begin position="50"/>
        <end position="52"/>
    </location>
</feature>
<feature type="helix" evidence="12">
    <location>
        <begin position="63"/>
        <end position="76"/>
    </location>
</feature>
<feature type="helix" evidence="12">
    <location>
        <begin position="80"/>
        <end position="96"/>
    </location>
</feature>
<feature type="strand" evidence="12">
    <location>
        <begin position="99"/>
        <end position="106"/>
    </location>
</feature>
<feature type="turn" evidence="12">
    <location>
        <begin position="112"/>
        <end position="115"/>
    </location>
</feature>
<feature type="helix" evidence="12">
    <location>
        <begin position="118"/>
        <end position="134"/>
    </location>
</feature>
<feature type="strand" evidence="12">
    <location>
        <begin position="140"/>
        <end position="148"/>
    </location>
</feature>
<feature type="helix" evidence="12">
    <location>
        <begin position="149"/>
        <end position="151"/>
    </location>
</feature>
<feature type="helix" evidence="12">
    <location>
        <begin position="152"/>
        <end position="169"/>
    </location>
</feature>
<feature type="turn" evidence="12">
    <location>
        <begin position="170"/>
        <end position="172"/>
    </location>
</feature>
<feature type="strand" evidence="12">
    <location>
        <begin position="173"/>
        <end position="181"/>
    </location>
</feature>
<feature type="helix" evidence="12">
    <location>
        <begin position="188"/>
        <end position="190"/>
    </location>
</feature>
<feature type="helix" evidence="12">
    <location>
        <begin position="192"/>
        <end position="201"/>
    </location>
</feature>
<feature type="strand" evidence="12">
    <location>
        <begin position="204"/>
        <end position="210"/>
    </location>
</feature>
<feature type="strand" evidence="12">
    <location>
        <begin position="212"/>
        <end position="214"/>
    </location>
</feature>
<feature type="helix" evidence="12">
    <location>
        <begin position="216"/>
        <end position="223"/>
    </location>
</feature>
<feature type="strand" evidence="12">
    <location>
        <begin position="228"/>
        <end position="232"/>
    </location>
</feature>
<feature type="turn" evidence="12">
    <location>
        <begin position="234"/>
        <end position="237"/>
    </location>
</feature>
<feature type="turn" evidence="12">
    <location>
        <begin position="239"/>
        <end position="241"/>
    </location>
</feature>
<feature type="helix" evidence="12">
    <location>
        <begin position="244"/>
        <end position="252"/>
    </location>
</feature>
<feature type="strand" evidence="12">
    <location>
        <begin position="257"/>
        <end position="259"/>
    </location>
</feature>
<feature type="helix" evidence="12">
    <location>
        <begin position="261"/>
        <end position="266"/>
    </location>
</feature>
<feature type="strand" evidence="12">
    <location>
        <begin position="269"/>
        <end position="271"/>
    </location>
</feature>
<feature type="helix" evidence="12">
    <location>
        <begin position="273"/>
        <end position="275"/>
    </location>
</feature>
<feature type="helix" evidence="12">
    <location>
        <begin position="278"/>
        <end position="282"/>
    </location>
</feature>
<feature type="turn" evidence="12">
    <location>
        <begin position="283"/>
        <end position="285"/>
    </location>
</feature>
<feature type="strand" evidence="12">
    <location>
        <begin position="288"/>
        <end position="290"/>
    </location>
</feature>
<feature type="turn" evidence="12">
    <location>
        <begin position="295"/>
        <end position="299"/>
    </location>
</feature>
<feature type="helix" evidence="12">
    <location>
        <begin position="302"/>
        <end position="313"/>
    </location>
</feature>
<feature type="helix" evidence="12">
    <location>
        <begin position="317"/>
        <end position="326"/>
    </location>
</feature>
<feature type="helix" evidence="12">
    <location>
        <begin position="327"/>
        <end position="330"/>
    </location>
</feature>
<feature type="helix" evidence="12">
    <location>
        <begin position="335"/>
        <end position="352"/>
    </location>
</feature>
<sequence>MIEAEEQQPCKTDFYSELPKVELHAHLNGSISSHTMKKLIAQKPDLKIHDQMTVIDKGKKRTLEECFQMFQTIHQLTSSPEDILMVTKDVIKEFADDGVKYLELRSTPRRENATGMTKKTYVESILEGIKQSKQENLDIDVRYLIAVDRRGGPLVAKETVKLAEEFFLSTEGTVLGLDLSGDPTVGQAKDFLEPLLEAKKAGLKLALHLSEIPNQKKETQILLDLLPDRIGHGTFLNSGEGGSLDLVDFVRQHRIPLELCLTSNVKSQTVPSYDQHHFGFWYSIAHPSVICTDDKGVFATHLSQEYQLAAETFNLTQSQVWDLSYESINYIFASDSTRSELRKKWNHLKPRVLHI</sequence>
<name>ADAL_HUMAN</name>
<comment type="function">
    <text evidence="3 4">Catalyzes the hydrolysis of the free cytosolic methylated adenosine nucleotide N(6)-methyl-AMP (N6-mAMP) to produce inositol monophosphate (IMP) and methylamine (PubMed:21755941, PubMed:29884623). Is required for the catabolism of cytosolic N6-mAMP, which is derived from the degradation of mRNA containing N6-methylated adenine (m6A) (PubMed:21755941, PubMed:29884623). Catalyzes the removal of different alkyl groups not only from N6-substituted purine or 2-aminopurine nucleoside monophosphates but also from O6-substituted compounds in vitro (PubMed:21755941).</text>
</comment>
<comment type="catalytic activity">
    <reaction evidence="3 4">
        <text>N(6)-methyl-AMP + H2O + H(+) = IMP + methylamine</text>
        <dbReference type="Rhea" id="RHEA:16001"/>
        <dbReference type="ChEBI" id="CHEBI:15377"/>
        <dbReference type="ChEBI" id="CHEBI:15378"/>
        <dbReference type="ChEBI" id="CHEBI:58053"/>
        <dbReference type="ChEBI" id="CHEBI:59338"/>
        <dbReference type="ChEBI" id="CHEBI:144842"/>
    </reaction>
    <physiologicalReaction direction="left-to-right" evidence="3 4">
        <dbReference type="Rhea" id="RHEA:16002"/>
    </physiologicalReaction>
</comment>
<comment type="cofactor">
    <cofactor evidence="3 4">
        <name>Zn(2+)</name>
        <dbReference type="ChEBI" id="CHEBI:29105"/>
    </cofactor>
    <text evidence="10">Binds 1 zinc ion per subunit.</text>
</comment>
<comment type="biophysicochemical properties">
    <kinetics>
        <KM evidence="3">12.5 uM for N(6)-methyl-AMP</KM>
    </kinetics>
</comment>
<comment type="subunit">
    <text evidence="3">Monomer.</text>
</comment>
<comment type="interaction">
    <interactant intactId="EBI-18899653">
        <id>Q6DHV7-2</id>
    </interactant>
    <interactant intactId="EBI-718729">
        <id>P55212</id>
        <label>CASP6</label>
    </interactant>
    <organismsDiffer>false</organismsDiffer>
    <experiments>3</experiments>
</comment>
<comment type="interaction">
    <interactant intactId="EBI-18899653">
        <id>Q6DHV7-2</id>
    </interactant>
    <interactant intactId="EBI-6624398">
        <id>P06307</id>
        <label>CCK</label>
    </interactant>
    <organismsDiffer>false</organismsDiffer>
    <experiments>3</experiments>
</comment>
<comment type="interaction">
    <interactant intactId="EBI-18899653">
        <id>Q6DHV7-2</id>
    </interactant>
    <interactant intactId="EBI-1054228">
        <id>P41091</id>
        <label>EIF2S3</label>
    </interactant>
    <organismsDiffer>false</organismsDiffer>
    <experiments>3</experiments>
</comment>
<comment type="interaction">
    <interactant intactId="EBI-18899653">
        <id>Q6DHV7-2</id>
    </interactant>
    <interactant intactId="EBI-25852368">
        <id>O75460-2</id>
        <label>ERN1</label>
    </interactant>
    <organismsDiffer>false</organismsDiffer>
    <experiments>3</experiments>
</comment>
<comment type="interaction">
    <interactant intactId="EBI-18899653">
        <id>Q6DHV7-2</id>
    </interactant>
    <interactant intactId="EBI-10226858">
        <id>Q0VDC6</id>
        <label>FKBP1A</label>
    </interactant>
    <organismsDiffer>false</organismsDiffer>
    <experiments>3</experiments>
</comment>
<comment type="interaction">
    <interactant intactId="EBI-18899653">
        <id>Q6DHV7-2</id>
    </interactant>
    <interactant intactId="EBI-712096">
        <id>P30519</id>
        <label>HMOX2</label>
    </interactant>
    <organismsDiffer>false</organismsDiffer>
    <experiments>3</experiments>
</comment>
<comment type="interaction">
    <interactant intactId="EBI-18899653">
        <id>Q6DHV7-2</id>
    </interactant>
    <interactant intactId="EBI-356991">
        <id>P54652</id>
        <label>HSPA2</label>
    </interactant>
    <organismsDiffer>false</organismsDiffer>
    <experiments>3</experiments>
</comment>
<comment type="interaction">
    <interactant intactId="EBI-18899653">
        <id>Q6DHV7-2</id>
    </interactant>
    <interactant intactId="EBI-21591415">
        <id>P13473-2</id>
        <label>LAMP2</label>
    </interactant>
    <organismsDiffer>false</organismsDiffer>
    <experiments>3</experiments>
</comment>
<comment type="interaction">
    <interactant intactId="EBI-18899653">
        <id>Q6DHV7-2</id>
    </interactant>
    <interactant intactId="EBI-6165891">
        <id>Q14696</id>
        <label>MESD</label>
    </interactant>
    <organismsDiffer>false</organismsDiffer>
    <experiments>3</experiments>
</comment>
<comment type="interaction">
    <interactant intactId="EBI-18899653">
        <id>Q6DHV7-2</id>
    </interactant>
    <interactant intactId="EBI-716404">
        <id>P16284</id>
        <label>PECAM1</label>
    </interactant>
    <organismsDiffer>false</organismsDiffer>
    <experiments>3</experiments>
</comment>
<comment type="interaction">
    <interactant intactId="EBI-18899653">
        <id>Q6DHV7-2</id>
    </interactant>
    <interactant intactId="EBI-5774511">
        <id>P05771-2</id>
        <label>PRKCB</label>
    </interactant>
    <organismsDiffer>false</organismsDiffer>
    <experiments>3</experiments>
</comment>
<comment type="interaction">
    <interactant intactId="EBI-18899653">
        <id>Q6DHV7-2</id>
    </interactant>
    <interactant intactId="EBI-5280197">
        <id>O75400-2</id>
        <label>PRPF40A</label>
    </interactant>
    <organismsDiffer>false</organismsDiffer>
    <experiments>3</experiments>
</comment>
<comment type="interaction">
    <interactant intactId="EBI-18899653">
        <id>Q6DHV7-2</id>
    </interactant>
    <interactant intactId="EBI-286642">
        <id>P62826</id>
        <label>RAN</label>
    </interactant>
    <organismsDiffer>false</organismsDiffer>
    <experiments>3</experiments>
</comment>
<comment type="interaction">
    <interactant intactId="EBI-18899653">
        <id>Q6DHV7-2</id>
    </interactant>
    <interactant intactId="EBI-1053431">
        <id>P49591</id>
        <label>SARS1</label>
    </interactant>
    <organismsDiffer>false</organismsDiffer>
    <experiments>3</experiments>
</comment>
<comment type="interaction">
    <interactant intactId="EBI-18899653">
        <id>Q6DHV7-2</id>
    </interactant>
    <interactant intactId="EBI-1054052">
        <id>P31948</id>
        <label>STIP1</label>
    </interactant>
    <organismsDiffer>false</organismsDiffer>
    <experiments>3</experiments>
</comment>
<comment type="interaction">
    <interactant intactId="EBI-18899653">
        <id>Q6DHV7-2</id>
    </interactant>
    <interactant intactId="EBI-473850">
        <id>P61086</id>
        <label>UBE2K</label>
    </interactant>
    <organismsDiffer>false</organismsDiffer>
    <experiments>3</experiments>
</comment>
<comment type="interaction">
    <interactant intactId="EBI-18899653">
        <id>Q6DHV7-2</id>
    </interactant>
    <interactant intactId="EBI-353844">
        <id>P08670</id>
        <label>VIM</label>
    </interactant>
    <organismsDiffer>false</organismsDiffer>
    <experiments>3</experiments>
</comment>
<comment type="alternative products">
    <event type="alternative splicing"/>
    <isoform>
        <id>Q6DHV7-1</id>
        <name>1</name>
        <sequence type="displayed"/>
    </isoform>
    <isoform>
        <id>Q6DHV7-2</id>
        <name>2</name>
        <sequence type="described" ref="VSP_024821"/>
    </isoform>
    <isoform>
        <id>Q6DHV7-3</id>
        <name>3</name>
        <sequence type="described" ref="VSP_042782"/>
    </isoform>
</comment>
<comment type="similarity">
    <text evidence="9">Belongs to the metallo-dependent hydrolases superfamily. Adenosine and AMP deaminases family.</text>
</comment>
<gene>
    <name evidence="11" type="primary">MAPDA</name>
    <name type="synonym">ADAL</name>
    <name evidence="7" type="synonym">ADAL1</name>
</gene>
<protein>
    <recommendedName>
        <fullName evidence="11">N6-Methyl-AMP deaminase</fullName>
        <ecNumber evidence="3 4">3.5.4.-</ecNumber>
    </recommendedName>
    <alternativeName>
        <fullName evidence="7">Adenosine deaminase-like protein</fullName>
    </alternativeName>
    <alternativeName>
        <fullName evidence="8">N6-mAMP deaminase</fullName>
        <shortName evidence="8">HsMAPDA</shortName>
    </alternativeName>
    <alternativeName>
        <fullName evidence="7">N6-methyl-AMP aminohydrolase</fullName>
    </alternativeName>
</protein>
<keyword id="KW-0002">3D-structure</keyword>
<keyword id="KW-0025">Alternative splicing</keyword>
<keyword id="KW-0378">Hydrolase</keyword>
<keyword id="KW-0479">Metal-binding</keyword>
<keyword id="KW-0546">Nucleotide metabolism</keyword>
<keyword id="KW-1267">Proteomics identification</keyword>
<keyword id="KW-1185">Reference proteome</keyword>
<keyword id="KW-0862">Zinc</keyword>